<sequence>MPELPEVETSRRGIEPYLVGQTILYAVVRNARLRWPVSDEILTLSDQPVLSVQRRAKYLLLELPKGWIIIHLGMSGSLRVLSEETAAEKHDHVDLVVSNGKILRYTDPRRFGAWLWAKDLETSNVLAHLGPEPLSDEFTAQYLFDKSRNKRTLIKPWLMDNKVVVGVGNIYASESLFAAGILPDRAAGSLTDAESVLLVATIKAVLLHSIEQGGTTLRDFLQSDGKPGYFAQELQVYGRAGEPCRQCGHPIEIAKHGQRSTFFCRHCQH</sequence>
<proteinExistence type="inferred from homology"/>
<accession>Q66GD3</accession>
<evidence type="ECO:0000250" key="1"/>
<evidence type="ECO:0000255" key="2">
    <source>
        <dbReference type="HAMAP-Rule" id="MF_00103"/>
    </source>
</evidence>
<dbReference type="EC" id="3.2.2.23" evidence="2"/>
<dbReference type="EC" id="4.2.99.18" evidence="2"/>
<dbReference type="EMBL" id="BX936398">
    <property type="protein sequence ID" value="CAH19289.1"/>
    <property type="molecule type" value="Genomic_DNA"/>
</dbReference>
<dbReference type="RefSeq" id="WP_002208989.1">
    <property type="nucleotide sequence ID" value="NZ_CP009712.1"/>
</dbReference>
<dbReference type="SMR" id="Q66GD3"/>
<dbReference type="GeneID" id="57974538"/>
<dbReference type="KEGG" id="ypo:BZ17_2546"/>
<dbReference type="KEGG" id="yps:YPTB0049"/>
<dbReference type="PATRIC" id="fig|273123.14.peg.2671"/>
<dbReference type="Proteomes" id="UP000001011">
    <property type="component" value="Chromosome"/>
</dbReference>
<dbReference type="GO" id="GO:0034039">
    <property type="term" value="F:8-oxo-7,8-dihydroguanine DNA N-glycosylase activity"/>
    <property type="evidence" value="ECO:0007669"/>
    <property type="project" value="TreeGrafter"/>
</dbReference>
<dbReference type="GO" id="GO:0140078">
    <property type="term" value="F:class I DNA-(apurinic or apyrimidinic site) endonuclease activity"/>
    <property type="evidence" value="ECO:0007669"/>
    <property type="project" value="UniProtKB-EC"/>
</dbReference>
<dbReference type="GO" id="GO:0003684">
    <property type="term" value="F:damaged DNA binding"/>
    <property type="evidence" value="ECO:0007669"/>
    <property type="project" value="InterPro"/>
</dbReference>
<dbReference type="GO" id="GO:0008270">
    <property type="term" value="F:zinc ion binding"/>
    <property type="evidence" value="ECO:0007669"/>
    <property type="project" value="UniProtKB-UniRule"/>
</dbReference>
<dbReference type="GO" id="GO:0006284">
    <property type="term" value="P:base-excision repair"/>
    <property type="evidence" value="ECO:0007669"/>
    <property type="project" value="InterPro"/>
</dbReference>
<dbReference type="CDD" id="cd08966">
    <property type="entry name" value="EcFpg-like_N"/>
    <property type="match status" value="1"/>
</dbReference>
<dbReference type="FunFam" id="1.10.8.50:FF:000003">
    <property type="entry name" value="Formamidopyrimidine-DNA glycosylase"/>
    <property type="match status" value="1"/>
</dbReference>
<dbReference type="FunFam" id="3.20.190.10:FF:000001">
    <property type="entry name" value="Formamidopyrimidine-DNA glycosylase"/>
    <property type="match status" value="1"/>
</dbReference>
<dbReference type="Gene3D" id="1.10.8.50">
    <property type="match status" value="1"/>
</dbReference>
<dbReference type="Gene3D" id="3.20.190.10">
    <property type="entry name" value="MutM-like, N-terminal"/>
    <property type="match status" value="1"/>
</dbReference>
<dbReference type="HAMAP" id="MF_00103">
    <property type="entry name" value="Fapy_DNA_glycosyl"/>
    <property type="match status" value="1"/>
</dbReference>
<dbReference type="InterPro" id="IPR015886">
    <property type="entry name" value="DNA_glyclase/AP_lyase_DNA-bd"/>
</dbReference>
<dbReference type="InterPro" id="IPR015887">
    <property type="entry name" value="DNA_glyclase_Znf_dom_DNA_BS"/>
</dbReference>
<dbReference type="InterPro" id="IPR020629">
    <property type="entry name" value="Formamido-pyr_DNA_Glyclase"/>
</dbReference>
<dbReference type="InterPro" id="IPR012319">
    <property type="entry name" value="FPG_cat"/>
</dbReference>
<dbReference type="InterPro" id="IPR035937">
    <property type="entry name" value="MutM-like_N-ter"/>
</dbReference>
<dbReference type="InterPro" id="IPR010979">
    <property type="entry name" value="Ribosomal_uS13-like_H2TH"/>
</dbReference>
<dbReference type="InterPro" id="IPR000214">
    <property type="entry name" value="Znf_DNA_glyclase/AP_lyase"/>
</dbReference>
<dbReference type="InterPro" id="IPR010663">
    <property type="entry name" value="Znf_FPG/IleRS"/>
</dbReference>
<dbReference type="NCBIfam" id="TIGR00577">
    <property type="entry name" value="fpg"/>
    <property type="match status" value="1"/>
</dbReference>
<dbReference type="NCBIfam" id="NF002211">
    <property type="entry name" value="PRK01103.1"/>
    <property type="match status" value="1"/>
</dbReference>
<dbReference type="PANTHER" id="PTHR22993">
    <property type="entry name" value="FORMAMIDOPYRIMIDINE-DNA GLYCOSYLASE"/>
    <property type="match status" value="1"/>
</dbReference>
<dbReference type="PANTHER" id="PTHR22993:SF9">
    <property type="entry name" value="FORMAMIDOPYRIMIDINE-DNA GLYCOSYLASE"/>
    <property type="match status" value="1"/>
</dbReference>
<dbReference type="Pfam" id="PF01149">
    <property type="entry name" value="Fapy_DNA_glyco"/>
    <property type="match status" value="1"/>
</dbReference>
<dbReference type="Pfam" id="PF06831">
    <property type="entry name" value="H2TH"/>
    <property type="match status" value="1"/>
</dbReference>
<dbReference type="Pfam" id="PF06827">
    <property type="entry name" value="zf-FPG_IleRS"/>
    <property type="match status" value="1"/>
</dbReference>
<dbReference type="SMART" id="SM00898">
    <property type="entry name" value="Fapy_DNA_glyco"/>
    <property type="match status" value="1"/>
</dbReference>
<dbReference type="SMART" id="SM01232">
    <property type="entry name" value="H2TH"/>
    <property type="match status" value="1"/>
</dbReference>
<dbReference type="SUPFAM" id="SSF57716">
    <property type="entry name" value="Glucocorticoid receptor-like (DNA-binding domain)"/>
    <property type="match status" value="1"/>
</dbReference>
<dbReference type="SUPFAM" id="SSF81624">
    <property type="entry name" value="N-terminal domain of MutM-like DNA repair proteins"/>
    <property type="match status" value="1"/>
</dbReference>
<dbReference type="SUPFAM" id="SSF46946">
    <property type="entry name" value="S13-like H2TH domain"/>
    <property type="match status" value="1"/>
</dbReference>
<dbReference type="PROSITE" id="PS51068">
    <property type="entry name" value="FPG_CAT"/>
    <property type="match status" value="1"/>
</dbReference>
<dbReference type="PROSITE" id="PS01242">
    <property type="entry name" value="ZF_FPG_1"/>
    <property type="match status" value="1"/>
</dbReference>
<dbReference type="PROSITE" id="PS51066">
    <property type="entry name" value="ZF_FPG_2"/>
    <property type="match status" value="1"/>
</dbReference>
<feature type="initiator methionine" description="Removed" evidence="1">
    <location>
        <position position="1"/>
    </location>
</feature>
<feature type="chain" id="PRO_0000228487" description="Formamidopyrimidine-DNA glycosylase">
    <location>
        <begin position="2"/>
        <end position="269"/>
    </location>
</feature>
<feature type="zinc finger region" description="FPG-type" evidence="2">
    <location>
        <begin position="235"/>
        <end position="269"/>
    </location>
</feature>
<feature type="active site" description="Schiff-base intermediate with DNA" evidence="2">
    <location>
        <position position="2"/>
    </location>
</feature>
<feature type="active site" description="Proton donor" evidence="2">
    <location>
        <position position="3"/>
    </location>
</feature>
<feature type="active site" description="Proton donor; for beta-elimination activity" evidence="2">
    <location>
        <position position="57"/>
    </location>
</feature>
<feature type="active site" description="Proton donor; for delta-elimination activity" evidence="2">
    <location>
        <position position="259"/>
    </location>
</feature>
<feature type="binding site" evidence="2">
    <location>
        <position position="90"/>
    </location>
    <ligand>
        <name>DNA</name>
        <dbReference type="ChEBI" id="CHEBI:16991"/>
    </ligand>
</feature>
<feature type="binding site" evidence="2">
    <location>
        <position position="109"/>
    </location>
    <ligand>
        <name>DNA</name>
        <dbReference type="ChEBI" id="CHEBI:16991"/>
    </ligand>
</feature>
<feature type="binding site" evidence="2">
    <location>
        <position position="150"/>
    </location>
    <ligand>
        <name>DNA</name>
        <dbReference type="ChEBI" id="CHEBI:16991"/>
    </ligand>
</feature>
<gene>
    <name evidence="2" type="primary">mutM</name>
    <name evidence="2" type="synonym">fpg</name>
    <name type="ordered locus">YPTB0049</name>
</gene>
<name>FPG_YERPS</name>
<comment type="function">
    <text evidence="2">Involved in base excision repair of DNA damaged by oxidation or by mutagenic agents. Acts as a DNA glycosylase that recognizes and removes damaged bases. Has a preference for oxidized purines, such as 7,8-dihydro-8-oxoguanine (8-oxoG). Has AP (apurinic/apyrimidinic) lyase activity and introduces nicks in the DNA strand. Cleaves the DNA backbone by beta-delta elimination to generate a single-strand break at the site of the removed base with both 3'- and 5'-phosphates.</text>
</comment>
<comment type="catalytic activity">
    <reaction evidence="2">
        <text>Hydrolysis of DNA containing ring-opened 7-methylguanine residues, releasing 2,6-diamino-4-hydroxy-5-(N-methyl)formamidopyrimidine.</text>
        <dbReference type="EC" id="3.2.2.23"/>
    </reaction>
</comment>
<comment type="catalytic activity">
    <reaction evidence="2">
        <text>2'-deoxyribonucleotide-(2'-deoxyribose 5'-phosphate)-2'-deoxyribonucleotide-DNA = a 3'-end 2'-deoxyribonucleotide-(2,3-dehydro-2,3-deoxyribose 5'-phosphate)-DNA + a 5'-end 5'-phospho-2'-deoxyribonucleoside-DNA + H(+)</text>
        <dbReference type="Rhea" id="RHEA:66592"/>
        <dbReference type="Rhea" id="RHEA-COMP:13180"/>
        <dbReference type="Rhea" id="RHEA-COMP:16897"/>
        <dbReference type="Rhea" id="RHEA-COMP:17067"/>
        <dbReference type="ChEBI" id="CHEBI:15378"/>
        <dbReference type="ChEBI" id="CHEBI:136412"/>
        <dbReference type="ChEBI" id="CHEBI:157695"/>
        <dbReference type="ChEBI" id="CHEBI:167181"/>
        <dbReference type="EC" id="4.2.99.18"/>
    </reaction>
</comment>
<comment type="cofactor">
    <cofactor evidence="2">
        <name>Zn(2+)</name>
        <dbReference type="ChEBI" id="CHEBI:29105"/>
    </cofactor>
    <text evidence="2">Binds 1 zinc ion per subunit.</text>
</comment>
<comment type="subunit">
    <text evidence="2">Monomer.</text>
</comment>
<comment type="similarity">
    <text evidence="2">Belongs to the FPG family.</text>
</comment>
<reference key="1">
    <citation type="journal article" date="2004" name="Proc. Natl. Acad. Sci. U.S.A.">
        <title>Insights into the evolution of Yersinia pestis through whole-genome comparison with Yersinia pseudotuberculosis.</title>
        <authorList>
            <person name="Chain P.S.G."/>
            <person name="Carniel E."/>
            <person name="Larimer F.W."/>
            <person name="Lamerdin J."/>
            <person name="Stoutland P.O."/>
            <person name="Regala W.M."/>
            <person name="Georgescu A.M."/>
            <person name="Vergez L.M."/>
            <person name="Land M.L."/>
            <person name="Motin V.L."/>
            <person name="Brubaker R.R."/>
            <person name="Fowler J."/>
            <person name="Hinnebusch J."/>
            <person name="Marceau M."/>
            <person name="Medigue C."/>
            <person name="Simonet M."/>
            <person name="Chenal-Francisque V."/>
            <person name="Souza B."/>
            <person name="Dacheux D."/>
            <person name="Elliott J.M."/>
            <person name="Derbise A."/>
            <person name="Hauser L.J."/>
            <person name="Garcia E."/>
        </authorList>
    </citation>
    <scope>NUCLEOTIDE SEQUENCE [LARGE SCALE GENOMIC DNA]</scope>
    <source>
        <strain>IP32953</strain>
    </source>
</reference>
<organism>
    <name type="scientific">Yersinia pseudotuberculosis serotype I (strain IP32953)</name>
    <dbReference type="NCBI Taxonomy" id="273123"/>
    <lineage>
        <taxon>Bacteria</taxon>
        <taxon>Pseudomonadati</taxon>
        <taxon>Pseudomonadota</taxon>
        <taxon>Gammaproteobacteria</taxon>
        <taxon>Enterobacterales</taxon>
        <taxon>Yersiniaceae</taxon>
        <taxon>Yersinia</taxon>
    </lineage>
</organism>
<keyword id="KW-0227">DNA damage</keyword>
<keyword id="KW-0234">DNA repair</keyword>
<keyword id="KW-0238">DNA-binding</keyword>
<keyword id="KW-0326">Glycosidase</keyword>
<keyword id="KW-0378">Hydrolase</keyword>
<keyword id="KW-0456">Lyase</keyword>
<keyword id="KW-0479">Metal-binding</keyword>
<keyword id="KW-0511">Multifunctional enzyme</keyword>
<keyword id="KW-0862">Zinc</keyword>
<keyword id="KW-0863">Zinc-finger</keyword>
<protein>
    <recommendedName>
        <fullName evidence="2">Formamidopyrimidine-DNA glycosylase</fullName>
        <shortName evidence="2">Fapy-DNA glycosylase</shortName>
        <ecNumber evidence="2">3.2.2.23</ecNumber>
    </recommendedName>
    <alternativeName>
        <fullName evidence="2">DNA-(apurinic or apyrimidinic site) lyase MutM</fullName>
        <shortName evidence="2">AP lyase MutM</shortName>
        <ecNumber evidence="2">4.2.99.18</ecNumber>
    </alternativeName>
</protein>